<feature type="chain" id="PRO_0000429880" description="D-mannonate dehydratase">
    <location>
        <begin position="1"/>
        <end position="419"/>
    </location>
</feature>
<feature type="active site" description="Proton donor/acceptor" evidence="1">
    <location>
        <position position="176"/>
    </location>
</feature>
<feature type="active site" description="Proton donor/acceptor" evidence="1">
    <location>
        <position position="229"/>
    </location>
</feature>
<feature type="binding site" evidence="1">
    <location>
        <position position="54"/>
    </location>
    <ligand>
        <name>substrate</name>
    </ligand>
</feature>
<feature type="binding site" evidence="1">
    <location>
        <position position="139"/>
    </location>
    <ligand>
        <name>substrate</name>
    </ligand>
</feature>
<feature type="binding site" evidence="1">
    <location>
        <position position="227"/>
    </location>
    <ligand>
        <name>Mg(2+)</name>
        <dbReference type="ChEBI" id="CHEBI:18420"/>
    </ligand>
</feature>
<feature type="binding site" evidence="1">
    <location>
        <position position="253"/>
    </location>
    <ligand>
        <name>Mg(2+)</name>
        <dbReference type="ChEBI" id="CHEBI:18420"/>
    </ligand>
</feature>
<feature type="binding site" evidence="1">
    <location>
        <position position="279"/>
    </location>
    <ligand>
        <name>Mg(2+)</name>
        <dbReference type="ChEBI" id="CHEBI:18420"/>
    </ligand>
</feature>
<feature type="binding site" evidence="1">
    <location>
        <position position="279"/>
    </location>
    <ligand>
        <name>substrate</name>
    </ligand>
</feature>
<feature type="binding site" evidence="1">
    <location>
        <position position="300"/>
    </location>
    <ligand>
        <name>substrate</name>
    </ligand>
</feature>
<feature type="binding site" evidence="1">
    <location>
        <position position="329"/>
    </location>
    <ligand>
        <name>substrate</name>
    </ligand>
</feature>
<feature type="binding site" evidence="1">
    <location>
        <position position="333"/>
    </location>
    <ligand>
        <name>substrate</name>
    </ligand>
</feature>
<feature type="binding site" evidence="1">
    <location>
        <position position="356"/>
    </location>
    <ligand>
        <name>substrate</name>
    </ligand>
</feature>
<feature type="site" description="Important for activity and substrate specificity; Ala is observed in family members with high D-mannonate dehydratase activity that have no activity with D-gluconate" evidence="1">
    <location>
        <position position="331"/>
    </location>
</feature>
<accession>G7TAD9</accession>
<keyword id="KW-0119">Carbohydrate metabolism</keyword>
<keyword id="KW-0456">Lyase</keyword>
<keyword id="KW-0460">Magnesium</keyword>
<keyword id="KW-0479">Metal-binding</keyword>
<comment type="function">
    <text evidence="2">Catalyzes the dehydration of D-mannonate. Has no detectable activity with a panel of 70 other acid sugars (in vitro).</text>
</comment>
<comment type="catalytic activity">
    <reaction evidence="2">
        <text>D-mannonate = 2-dehydro-3-deoxy-D-gluconate + H2O</text>
        <dbReference type="Rhea" id="RHEA:20097"/>
        <dbReference type="ChEBI" id="CHEBI:15377"/>
        <dbReference type="ChEBI" id="CHEBI:17767"/>
        <dbReference type="ChEBI" id="CHEBI:57990"/>
        <dbReference type="EC" id="4.2.1.8"/>
    </reaction>
</comment>
<comment type="cofactor">
    <cofactor evidence="2">
        <name>Mg(2+)</name>
        <dbReference type="ChEBI" id="CHEBI:18420"/>
    </cofactor>
    <text evidence="2">Binds 1 Mg(2+) ion per subunit.</text>
</comment>
<comment type="biophysicochemical properties">
    <kinetics>
        <text evidence="2">kcat is 0.8 sec(-1) with D-mannonate.</text>
    </kinetics>
</comment>
<comment type="pathway">
    <text>Carbohydrate metabolism; pentose and glucuronate interconversion.</text>
</comment>
<comment type="similarity">
    <text evidence="3">Belongs to the mandelate racemase/muconate lactonizing enzyme family. GalD subfamily.</text>
</comment>
<sequence>MSQPSDSTAPLQGSARDREIVEARVIVTCPGRNFVTLKIRTRSGITGVGDATLNGRELAVAAYLQEHLVPNLIGRDAGRIEDIWQFFYRGAYWRRGPVTMSAIAAVDVALWDILGKMAGMPLYQLLGGRSREGALVYGHANGRDIAETSDEVGRFREMGFIAIRAQCGVPGIKKTYGISVGGKPYEPAESELPTETVWSTPRYLGVVPRLFEQLRADHGDEIELLHDAHHRLTPIEAARLGRDLEPYRLFWLEDATPAENQRAFEIIRQHTVTPLAVGEVFNSIWDCKHLIEQQLIDYIRTTIVHAGGLTHVRRLADFAALHQVRTGFHGATDLSPVCMGAALHFDTWVPNFGIQEYMFHSDEANAVFPHDYQFRAGRLHCGETPGHGVDIDEALAARYPYTPKQLPILRLEDGTMGDW</sequence>
<dbReference type="EC" id="4.2.1.8"/>
<dbReference type="EMBL" id="CP003057">
    <property type="protein sequence ID" value="AEQ98528.1"/>
    <property type="molecule type" value="Genomic_DNA"/>
</dbReference>
<dbReference type="SMR" id="G7TAD9"/>
<dbReference type="KEGG" id="xor:XOC_4468"/>
<dbReference type="eggNOG" id="COG4948">
    <property type="taxonomic scope" value="Bacteria"/>
</dbReference>
<dbReference type="HOGENOM" id="CLU_030273_6_1_6"/>
<dbReference type="UniPathway" id="UPA00246"/>
<dbReference type="Proteomes" id="UP000008851">
    <property type="component" value="Chromosome"/>
</dbReference>
<dbReference type="GO" id="GO:0000287">
    <property type="term" value="F:magnesium ion binding"/>
    <property type="evidence" value="ECO:0000314"/>
    <property type="project" value="UniProtKB"/>
</dbReference>
<dbReference type="GO" id="GO:0008927">
    <property type="term" value="F:mannonate dehydratase activity"/>
    <property type="evidence" value="ECO:0000314"/>
    <property type="project" value="CACAO"/>
</dbReference>
<dbReference type="GO" id="GO:0009063">
    <property type="term" value="P:amino acid catabolic process"/>
    <property type="evidence" value="ECO:0007669"/>
    <property type="project" value="InterPro"/>
</dbReference>
<dbReference type="GO" id="GO:0016052">
    <property type="term" value="P:carbohydrate catabolic process"/>
    <property type="evidence" value="ECO:0000314"/>
    <property type="project" value="UniProtKB"/>
</dbReference>
<dbReference type="FunFam" id="3.20.20.120:FF:000004">
    <property type="entry name" value="D-galactonate dehydratase family protein"/>
    <property type="match status" value="1"/>
</dbReference>
<dbReference type="Gene3D" id="3.20.20.120">
    <property type="entry name" value="Enolase-like C-terminal domain"/>
    <property type="match status" value="1"/>
</dbReference>
<dbReference type="Gene3D" id="3.30.390.10">
    <property type="entry name" value="Enolase-like, N-terminal domain"/>
    <property type="match status" value="1"/>
</dbReference>
<dbReference type="InterPro" id="IPR034589">
    <property type="entry name" value="D-mannonate_dehydratase-like"/>
</dbReference>
<dbReference type="InterPro" id="IPR053379">
    <property type="entry name" value="D-mannonate_dehydratase_GalD"/>
</dbReference>
<dbReference type="InterPro" id="IPR034593">
    <property type="entry name" value="DgoD-like"/>
</dbReference>
<dbReference type="InterPro" id="IPR036849">
    <property type="entry name" value="Enolase-like_C_sf"/>
</dbReference>
<dbReference type="InterPro" id="IPR029017">
    <property type="entry name" value="Enolase-like_N"/>
</dbReference>
<dbReference type="InterPro" id="IPR029065">
    <property type="entry name" value="Enolase_C-like"/>
</dbReference>
<dbReference type="InterPro" id="IPR018110">
    <property type="entry name" value="Mandel_Rmase/mucon_lact_enz_CS"/>
</dbReference>
<dbReference type="InterPro" id="IPR013342">
    <property type="entry name" value="Mandelate_racemase_C"/>
</dbReference>
<dbReference type="InterPro" id="IPR013341">
    <property type="entry name" value="Mandelate_racemase_N_dom"/>
</dbReference>
<dbReference type="NCBIfam" id="NF043051">
    <property type="entry name" value="ManoateDhtManD"/>
    <property type="match status" value="1"/>
</dbReference>
<dbReference type="NCBIfam" id="NF011654">
    <property type="entry name" value="PRK15072.1"/>
    <property type="match status" value="1"/>
</dbReference>
<dbReference type="PANTHER" id="PTHR48080">
    <property type="entry name" value="D-GALACTONATE DEHYDRATASE-RELATED"/>
    <property type="match status" value="1"/>
</dbReference>
<dbReference type="PANTHER" id="PTHR48080:SF6">
    <property type="entry name" value="STARVATION-SENSING PROTEIN RSPA"/>
    <property type="match status" value="1"/>
</dbReference>
<dbReference type="Pfam" id="PF13378">
    <property type="entry name" value="MR_MLE_C"/>
    <property type="match status" value="1"/>
</dbReference>
<dbReference type="Pfam" id="PF02746">
    <property type="entry name" value="MR_MLE_N"/>
    <property type="match status" value="1"/>
</dbReference>
<dbReference type="SFLD" id="SFLDS00001">
    <property type="entry name" value="Enolase"/>
    <property type="match status" value="1"/>
</dbReference>
<dbReference type="SFLD" id="SFLDG00033">
    <property type="entry name" value="mannonate_dehydratase"/>
    <property type="match status" value="1"/>
</dbReference>
<dbReference type="SMART" id="SM00922">
    <property type="entry name" value="MR_MLE"/>
    <property type="match status" value="1"/>
</dbReference>
<dbReference type="SUPFAM" id="SSF51604">
    <property type="entry name" value="Enolase C-terminal domain-like"/>
    <property type="match status" value="1"/>
</dbReference>
<dbReference type="SUPFAM" id="SSF54826">
    <property type="entry name" value="Enolase N-terminal domain-like"/>
    <property type="match status" value="1"/>
</dbReference>
<dbReference type="PROSITE" id="PS00908">
    <property type="entry name" value="MR_MLE_1"/>
    <property type="match status" value="1"/>
</dbReference>
<organism>
    <name type="scientific">Xanthomonas oryzae pv. oryzicola (strain BLS256)</name>
    <dbReference type="NCBI Taxonomy" id="383407"/>
    <lineage>
        <taxon>Bacteria</taxon>
        <taxon>Pseudomonadati</taxon>
        <taxon>Pseudomonadota</taxon>
        <taxon>Gammaproteobacteria</taxon>
        <taxon>Lysobacterales</taxon>
        <taxon>Lysobacteraceae</taxon>
        <taxon>Xanthomonas</taxon>
    </lineage>
</organism>
<reference key="1">
    <citation type="journal article" date="2011" name="J. Bacteriol.">
        <title>Two new complete genome sequences offer insight into host and tissue specificity of plant pathogenic Xanthomonas spp.</title>
        <authorList>
            <person name="Bogdanove A.J."/>
            <person name="Koebnik R."/>
            <person name="Lu H."/>
            <person name="Furutani A."/>
            <person name="Angiuoli S.V."/>
            <person name="Patil P.B."/>
            <person name="Van Sluys M.A."/>
            <person name="Ryan R.P."/>
            <person name="Meyer D.F."/>
            <person name="Han S.W."/>
            <person name="Aparna G."/>
            <person name="Rajaram M."/>
            <person name="Delcher A.L."/>
            <person name="Phillippy A.M."/>
            <person name="Puiu D."/>
            <person name="Schatz M.C."/>
            <person name="Shumway M."/>
            <person name="Sommer D.D."/>
            <person name="Trapnell C."/>
            <person name="Benahmed F."/>
            <person name="Dimitrov G."/>
            <person name="Madupu R."/>
            <person name="Radune D."/>
            <person name="Sullivan S."/>
            <person name="Jha G."/>
            <person name="Ishihara H."/>
            <person name="Lee S.W."/>
            <person name="Pandey A."/>
            <person name="Sharma V."/>
            <person name="Sriariyanun M."/>
            <person name="Szurek B."/>
            <person name="Vera-Cruz C.M."/>
            <person name="Dorman K.S."/>
            <person name="Ronald P.C."/>
            <person name="Verdier V."/>
            <person name="Dow J.M."/>
            <person name="Sonti R.V."/>
            <person name="Tsuge S."/>
            <person name="Brendel V.P."/>
            <person name="Rabinowicz P.D."/>
            <person name="Leach J.E."/>
            <person name="White F.F."/>
            <person name="Salzberg S.L."/>
        </authorList>
    </citation>
    <scope>NUCLEOTIDE SEQUENCE [LARGE SCALE GENOMIC DNA]</scope>
    <source>
        <strain>BLS256</strain>
    </source>
</reference>
<reference key="2">
    <citation type="journal article" date="2014" name="Biochemistry">
        <title>Discovery of function in the enolase superfamily: D-mannonate and D-gluconate dehydratases in the D-mannonate dehydratase subgroup.</title>
        <authorList>
            <person name="Wichelecki D.J."/>
            <person name="Balthazor B.M."/>
            <person name="Chau A.C."/>
            <person name="Vetting M.W."/>
            <person name="Fedorov A.A."/>
            <person name="Fedorov E.V."/>
            <person name="Lukk T."/>
            <person name="Patskovsky Y.V."/>
            <person name="Stead M.B."/>
            <person name="Hillerich B.S."/>
            <person name="Seidel R.D."/>
            <person name="Almo S.C."/>
            <person name="Gerlt J.A."/>
        </authorList>
    </citation>
    <scope>FUNCTION</scope>
    <scope>CATALYTIC ACTIVITY</scope>
    <scope>COFACTOR</scope>
    <scope>BIOPHYSICOCHEMICAL PROPERTIES</scope>
    <source>
        <strain>BLS256</strain>
    </source>
</reference>
<protein>
    <recommendedName>
        <fullName>D-mannonate dehydratase</fullName>
        <shortName>ManD</shortName>
        <ecNumber>4.2.1.8</ecNumber>
    </recommendedName>
</protein>
<name>MAND_XANOB</name>
<evidence type="ECO:0000250" key="1"/>
<evidence type="ECO:0000269" key="2">
    <source>
    </source>
</evidence>
<evidence type="ECO:0000305" key="3"/>
<gene>
    <name type="ORF">XOC_4468</name>
</gene>
<proteinExistence type="evidence at protein level"/>